<protein>
    <recommendedName>
        <fullName evidence="1">Transcriptional repressor NrdR</fullName>
    </recommendedName>
</protein>
<comment type="function">
    <text evidence="1">Negatively regulates transcription of bacterial ribonucleotide reductase nrd genes and operons by binding to NrdR-boxes.</text>
</comment>
<comment type="cofactor">
    <cofactor evidence="1">
        <name>Zn(2+)</name>
        <dbReference type="ChEBI" id="CHEBI:29105"/>
    </cofactor>
    <text evidence="1">Binds 1 zinc ion.</text>
</comment>
<comment type="similarity">
    <text evidence="1">Belongs to the NrdR family.</text>
</comment>
<gene>
    <name evidence="1" type="primary">nrdR</name>
    <name type="ordered locus">PSEEN0587</name>
</gene>
<reference key="1">
    <citation type="journal article" date="2006" name="Nat. Biotechnol.">
        <title>Complete genome sequence of the entomopathogenic and metabolically versatile soil bacterium Pseudomonas entomophila.</title>
        <authorList>
            <person name="Vodovar N."/>
            <person name="Vallenet D."/>
            <person name="Cruveiller S."/>
            <person name="Rouy Z."/>
            <person name="Barbe V."/>
            <person name="Acosta C."/>
            <person name="Cattolico L."/>
            <person name="Jubin C."/>
            <person name="Lajus A."/>
            <person name="Segurens B."/>
            <person name="Vacherie B."/>
            <person name="Wincker P."/>
            <person name="Weissenbach J."/>
            <person name="Lemaitre B."/>
            <person name="Medigue C."/>
            <person name="Boccard F."/>
        </authorList>
    </citation>
    <scope>NUCLEOTIDE SEQUENCE [LARGE SCALE GENOMIC DNA]</scope>
    <source>
        <strain>L48</strain>
    </source>
</reference>
<name>NRDR_PSEE4</name>
<keyword id="KW-0067">ATP-binding</keyword>
<keyword id="KW-0238">DNA-binding</keyword>
<keyword id="KW-0479">Metal-binding</keyword>
<keyword id="KW-0547">Nucleotide-binding</keyword>
<keyword id="KW-0678">Repressor</keyword>
<keyword id="KW-0804">Transcription</keyword>
<keyword id="KW-0805">Transcription regulation</keyword>
<keyword id="KW-0862">Zinc</keyword>
<keyword id="KW-0863">Zinc-finger</keyword>
<sequence length="154" mass="17867">MHCPFCGANDTKVIDSRLVAEGEQVRRRRECVACGERFTTFETAELVLPRLIKQDGTRQPFDEDKLRAGMQRALEKRPVSIERLEAALAHIKSRLRATGEREVKSLVVGEMVMAELRKLDEVAYIRFASVYRRFQDLDEFREEIDRLAREPAKE</sequence>
<evidence type="ECO:0000255" key="1">
    <source>
        <dbReference type="HAMAP-Rule" id="MF_00440"/>
    </source>
</evidence>
<dbReference type="EMBL" id="CT573326">
    <property type="protein sequence ID" value="CAK13530.1"/>
    <property type="molecule type" value="Genomic_DNA"/>
</dbReference>
<dbReference type="RefSeq" id="WP_011531964.1">
    <property type="nucleotide sequence ID" value="NC_008027.1"/>
</dbReference>
<dbReference type="SMR" id="Q1IFM4"/>
<dbReference type="STRING" id="384676.PSEEN0587"/>
<dbReference type="GeneID" id="32803916"/>
<dbReference type="KEGG" id="pen:PSEEN0587"/>
<dbReference type="eggNOG" id="COG1327">
    <property type="taxonomic scope" value="Bacteria"/>
</dbReference>
<dbReference type="HOGENOM" id="CLU_108412_0_0_6"/>
<dbReference type="OrthoDB" id="9807461at2"/>
<dbReference type="Proteomes" id="UP000000658">
    <property type="component" value="Chromosome"/>
</dbReference>
<dbReference type="GO" id="GO:0005524">
    <property type="term" value="F:ATP binding"/>
    <property type="evidence" value="ECO:0007669"/>
    <property type="project" value="UniProtKB-KW"/>
</dbReference>
<dbReference type="GO" id="GO:0003677">
    <property type="term" value="F:DNA binding"/>
    <property type="evidence" value="ECO:0007669"/>
    <property type="project" value="UniProtKB-KW"/>
</dbReference>
<dbReference type="GO" id="GO:0008270">
    <property type="term" value="F:zinc ion binding"/>
    <property type="evidence" value="ECO:0007669"/>
    <property type="project" value="UniProtKB-UniRule"/>
</dbReference>
<dbReference type="GO" id="GO:0045892">
    <property type="term" value="P:negative regulation of DNA-templated transcription"/>
    <property type="evidence" value="ECO:0007669"/>
    <property type="project" value="UniProtKB-UniRule"/>
</dbReference>
<dbReference type="HAMAP" id="MF_00440">
    <property type="entry name" value="NrdR"/>
    <property type="match status" value="1"/>
</dbReference>
<dbReference type="InterPro" id="IPR005144">
    <property type="entry name" value="ATP-cone_dom"/>
</dbReference>
<dbReference type="InterPro" id="IPR055173">
    <property type="entry name" value="NrdR-like_N"/>
</dbReference>
<dbReference type="InterPro" id="IPR003796">
    <property type="entry name" value="RNR_NrdR-like"/>
</dbReference>
<dbReference type="NCBIfam" id="TIGR00244">
    <property type="entry name" value="transcriptional regulator NrdR"/>
    <property type="match status" value="1"/>
</dbReference>
<dbReference type="PANTHER" id="PTHR30455">
    <property type="entry name" value="TRANSCRIPTIONAL REPRESSOR NRDR"/>
    <property type="match status" value="1"/>
</dbReference>
<dbReference type="PANTHER" id="PTHR30455:SF2">
    <property type="entry name" value="TRANSCRIPTIONAL REPRESSOR NRDR"/>
    <property type="match status" value="1"/>
</dbReference>
<dbReference type="Pfam" id="PF03477">
    <property type="entry name" value="ATP-cone"/>
    <property type="match status" value="1"/>
</dbReference>
<dbReference type="Pfam" id="PF22811">
    <property type="entry name" value="Zn_ribbon_NrdR"/>
    <property type="match status" value="1"/>
</dbReference>
<dbReference type="PROSITE" id="PS51161">
    <property type="entry name" value="ATP_CONE"/>
    <property type="match status" value="1"/>
</dbReference>
<accession>Q1IFM4</accession>
<proteinExistence type="inferred from homology"/>
<organism>
    <name type="scientific">Pseudomonas entomophila (strain L48)</name>
    <dbReference type="NCBI Taxonomy" id="384676"/>
    <lineage>
        <taxon>Bacteria</taxon>
        <taxon>Pseudomonadati</taxon>
        <taxon>Pseudomonadota</taxon>
        <taxon>Gammaproteobacteria</taxon>
        <taxon>Pseudomonadales</taxon>
        <taxon>Pseudomonadaceae</taxon>
        <taxon>Pseudomonas</taxon>
    </lineage>
</organism>
<feature type="chain" id="PRO_1000080802" description="Transcriptional repressor NrdR">
    <location>
        <begin position="1"/>
        <end position="154"/>
    </location>
</feature>
<feature type="domain" description="ATP-cone" evidence="1">
    <location>
        <begin position="49"/>
        <end position="139"/>
    </location>
</feature>
<feature type="zinc finger region" evidence="1">
    <location>
        <begin position="3"/>
        <end position="34"/>
    </location>
</feature>